<reference key="1">
    <citation type="journal article" date="2000" name="Mech. Dev.">
        <title>Cooperative roles of Bozozok/Dharma and Nodal-related proteins in the formation of the dorsal organizer in zebrafish.</title>
        <authorList>
            <person name="Shimizu T."/>
            <person name="Yamanaka Y."/>
            <person name="Ryu S.-L."/>
            <person name="Hashimoto H."/>
            <person name="Yabe T."/>
            <person name="Hirata T."/>
            <person name="Bae Y.-K."/>
            <person name="Hibi M."/>
            <person name="Hirano T."/>
        </authorList>
    </citation>
    <scope>NUCLEOTIDE SEQUENCE [MRNA]</scope>
</reference>
<reference key="2">
    <citation type="submission" date="2001-06" db="EMBL/GenBank/DDBJ databases">
        <title>Cloning of zebrafish axin2.</title>
        <authorList>
            <person name="Pogoda H.-M."/>
            <person name="Meyer D."/>
        </authorList>
    </citation>
    <scope>NUCLEOTIDE SEQUENCE [MRNA]</scope>
</reference>
<reference key="3">
    <citation type="submission" date="2004-11" db="EMBL/GenBank/DDBJ databases">
        <title>Functional Analysis of Zebrafish axin2 during embryogenesis.</title>
        <authorList>
            <person name="Tsai J.N."/>
            <person name="Chang W.C."/>
        </authorList>
    </citation>
    <scope>NUCLEOTIDE SEQUENCE [MRNA]</scope>
</reference>
<reference key="4">
    <citation type="journal article" date="2018" name="Science">
        <title>Maternal Huluwa dictates the embryonic body axis through beta-catenin in vertebrates.</title>
        <authorList>
            <person name="Yan L."/>
            <person name="Chen J."/>
            <person name="Zhu X."/>
            <person name="Sun J."/>
            <person name="Wu X."/>
            <person name="Shen W."/>
            <person name="Zhang W."/>
            <person name="Tao Q."/>
            <person name="Meng A."/>
        </authorList>
    </citation>
    <scope>FUNCTION</scope>
    <scope>INTERACTION WITH HWA</scope>
</reference>
<accession>P57095</accession>
<accession>Q335M5</accession>
<evidence type="ECO:0000250" key="1"/>
<evidence type="ECO:0000250" key="2">
    <source>
        <dbReference type="UniProtKB" id="O15169"/>
    </source>
</evidence>
<evidence type="ECO:0000250" key="3">
    <source>
        <dbReference type="UniProtKB" id="Q9Y2T1"/>
    </source>
</evidence>
<evidence type="ECO:0000255" key="4">
    <source>
        <dbReference type="PROSITE-ProRule" id="PRU00069"/>
    </source>
</evidence>
<evidence type="ECO:0000255" key="5">
    <source>
        <dbReference type="PROSITE-ProRule" id="PRU00171"/>
    </source>
</evidence>
<evidence type="ECO:0000256" key="6">
    <source>
        <dbReference type="SAM" id="MobiDB-lite"/>
    </source>
</evidence>
<evidence type="ECO:0000269" key="7">
    <source>
    </source>
</evidence>
<evidence type="ECO:0000305" key="8">
    <source>
    </source>
</evidence>
<organism>
    <name type="scientific">Danio rerio</name>
    <name type="common">Zebrafish</name>
    <name type="synonym">Brachydanio rerio</name>
    <dbReference type="NCBI Taxonomy" id="7955"/>
    <lineage>
        <taxon>Eukaryota</taxon>
        <taxon>Metazoa</taxon>
        <taxon>Chordata</taxon>
        <taxon>Craniata</taxon>
        <taxon>Vertebrata</taxon>
        <taxon>Euteleostomi</taxon>
        <taxon>Actinopterygii</taxon>
        <taxon>Neopterygii</taxon>
        <taxon>Teleostei</taxon>
        <taxon>Ostariophysi</taxon>
        <taxon>Cypriniformes</taxon>
        <taxon>Danionidae</taxon>
        <taxon>Danioninae</taxon>
        <taxon>Danio</taxon>
    </lineage>
</organism>
<sequence length="812" mass="91497">MNRTLTDPMVSSFREDDPRPPVPGEEGETTCHHPSKLAMMRPKDPVKTIMADLRCSTARRDEDGLGEPEGSASPDSPLARWTKSLHFLLGDQDGAQLFRAYLEREKCVDTLDFWFACNGFRQMDLKDTKTHRVAKAIYKRYIENNSIVAKQLKPATKTFIRDNIKRQQIDSAMFDQAQMEIQTAMEENAYQMFLTSDIYLEYVRTGCENPSHVNPNGLGGLKLVCGYLPTLNEEEEWSCNDFKAKALATVVGLSAKTLRSPPLRAVEALEKGYRSYRRSDPGNPNRFTSGYSFAPATSANDSEVSSDALTDDSMSMTDSSVDAIPPYKLGSKKQLQREMQRNMRMNGQVSLPPFPRTRRPPKEMTPVEPAAFAAQLIARLERLKREQETMSSLEERLQQIQEEEERDESEMSSSSASHSLPLLPPGTCEEDPQAILDEHLSRVLKTPGCQSPGLLRHSPRSRSPEQRPLPRGGLSTRSQSSSMNGYVPAKTFISRQSTKHIHHHYIHHHAGPKSKEQIEVEATQRVQCLCHGTSECCTAPYIRSRSLGRDQCASPAEVALGHSSTLSKRLCKSGEEVNMEGLENSLLQLPADSTDRSQNVWQWILESDRQTKHKPHSTQNVKKSHSLEPTRTHTWGGGGSSGHLRAHQPAHPFVQDPAMPPLPPPNTLAQLEEARRRLEEVSKPSKQRHSTSSLQRDKSHPVPVQNGSSAFPMDERKDPKKMSGCHSSLGSETVVTYFFCGEEIPYRRMMKTHSLTLGHFKEQLRKKGNYRYFFKRASDEFECGAVFEEVWDDCTVLPMYEGKILGKVDRMD</sequence>
<name>AXIN2_DANRE</name>
<feature type="chain" id="PRO_0000220898" description="Axin-2">
    <location>
        <begin position="1"/>
        <end position="812"/>
    </location>
</feature>
<feature type="domain" description="RGS" evidence="5">
    <location>
        <begin position="84"/>
        <end position="203"/>
    </location>
</feature>
<feature type="domain" description="DIX" evidence="4">
    <location>
        <begin position="730"/>
        <end position="812"/>
    </location>
</feature>
<feature type="region of interest" description="Disordered" evidence="6">
    <location>
        <begin position="1"/>
        <end position="43"/>
    </location>
</feature>
<feature type="region of interest" description="Disordered" evidence="6">
    <location>
        <begin position="275"/>
        <end position="326"/>
    </location>
</feature>
<feature type="region of interest" description="Interaction with GSK3B" evidence="1">
    <location>
        <begin position="329"/>
        <end position="415"/>
    </location>
</feature>
<feature type="region of interest" description="Disordered" evidence="6">
    <location>
        <begin position="388"/>
        <end position="430"/>
    </location>
</feature>
<feature type="region of interest" description="Interaction with beta-catenin" evidence="1">
    <location>
        <begin position="415"/>
        <end position="467"/>
    </location>
</feature>
<feature type="region of interest" description="Disordered" evidence="6">
    <location>
        <begin position="446"/>
        <end position="484"/>
    </location>
</feature>
<feature type="region of interest" description="Disordered" evidence="6">
    <location>
        <begin position="609"/>
        <end position="726"/>
    </location>
</feature>
<feature type="compositionally biased region" description="Polar residues" evidence="6">
    <location>
        <begin position="285"/>
        <end position="303"/>
    </location>
</feature>
<feature type="compositionally biased region" description="Low complexity" evidence="6">
    <location>
        <begin position="305"/>
        <end position="323"/>
    </location>
</feature>
<feature type="compositionally biased region" description="Basic and acidic residues" evidence="6">
    <location>
        <begin position="388"/>
        <end position="397"/>
    </location>
</feature>
<feature type="compositionally biased region" description="Acidic residues" evidence="6">
    <location>
        <begin position="401"/>
        <end position="410"/>
    </location>
</feature>
<feature type="compositionally biased region" description="Low complexity" evidence="6">
    <location>
        <begin position="411"/>
        <end position="421"/>
    </location>
</feature>
<feature type="compositionally biased region" description="Polar residues" evidence="6">
    <location>
        <begin position="475"/>
        <end position="484"/>
    </location>
</feature>
<feature type="compositionally biased region" description="Basic and acidic residues" evidence="6">
    <location>
        <begin position="672"/>
        <end position="683"/>
    </location>
</feature>
<comment type="function">
    <text evidence="2 7">Component of the beta-catenin destruction complex required for regulating ctnnb1 levels through phosphorylation and ubiquitination, and modulating Wnt-signaling (By similarity). Controls dorsoventral patterning by down-regulating ctnnb1 to inhibit the Wnt signaling pathway and ventralize embryos (PubMed:30467143).</text>
</comment>
<comment type="subunit">
    <text evidence="7">Interacts with hwa; leading to promote the tankyrase-mediated degradation of axin1.</text>
</comment>
<comment type="subcellular location">
    <subcellularLocation>
        <location evidence="3">Cytoplasm</location>
    </subcellularLocation>
</comment>
<comment type="PTM">
    <text evidence="8">ADP-ribosylated by tankyrase tnks and tnks2. Poly-ADP-ribosylated protein is recognized by rnf146, followed by ubiquitination and subsequent activation of the Wnt signaling pathway.</text>
</comment>
<comment type="PTM">
    <text evidence="8">Ubiquitinated by rnf146 when poly-ADP-ribosylated, leading to its degradation and subsequent activation of the Wnt signaling pathway.</text>
</comment>
<proteinExistence type="evidence at protein level"/>
<keyword id="KW-0013">ADP-ribosylation</keyword>
<keyword id="KW-0963">Cytoplasm</keyword>
<keyword id="KW-0217">Developmental protein</keyword>
<keyword id="KW-0597">Phosphoprotein</keyword>
<keyword id="KW-1185">Reference proteome</keyword>
<keyword id="KW-0832">Ubl conjugation</keyword>
<keyword id="KW-0879">Wnt signaling pathway</keyword>
<gene>
    <name type="primary">axin2</name>
</gene>
<protein>
    <recommendedName>
        <fullName>Axin-2</fullName>
    </recommendedName>
    <alternativeName>
        <fullName>Axis inhibition protein 2</fullName>
    </alternativeName>
</protein>
<dbReference type="EMBL" id="AB032263">
    <property type="protein sequence ID" value="BAA92440.1"/>
    <property type="molecule type" value="mRNA"/>
</dbReference>
<dbReference type="EMBL" id="AF387812">
    <property type="protein sequence ID" value="AAK70877.1"/>
    <property type="molecule type" value="mRNA"/>
</dbReference>
<dbReference type="EMBL" id="AJ854187">
    <property type="protein sequence ID" value="CAH69531.1"/>
    <property type="molecule type" value="mRNA"/>
</dbReference>
<dbReference type="RefSeq" id="NP_571636.1">
    <property type="nucleotide sequence ID" value="NM_131561.1"/>
</dbReference>
<dbReference type="SMR" id="P57095"/>
<dbReference type="FunCoup" id="P57095">
    <property type="interactions" value="1996"/>
</dbReference>
<dbReference type="STRING" id="7955.ENSDARP00000132477"/>
<dbReference type="PaxDb" id="7955-ENSDARP00000003845"/>
<dbReference type="Ensembl" id="ENSDART00000162413">
    <property type="protein sequence ID" value="ENSDARP00000132477"/>
    <property type="gene ID" value="ENSDARG00000100149"/>
</dbReference>
<dbReference type="Ensembl" id="ENSDART00000176127">
    <property type="protein sequence ID" value="ENSDARP00000143690"/>
    <property type="gene ID" value="ENSDARG00000100149"/>
</dbReference>
<dbReference type="GeneID" id="58080"/>
<dbReference type="KEGG" id="dre:58080"/>
<dbReference type="AGR" id="ZFIN:ZDB-GENE-000403-2"/>
<dbReference type="CTD" id="8313"/>
<dbReference type="ZFIN" id="ZDB-GENE-000403-2">
    <property type="gene designation" value="axin2"/>
</dbReference>
<dbReference type="eggNOG" id="KOG3589">
    <property type="taxonomic scope" value="Eukaryota"/>
</dbReference>
<dbReference type="HOGENOM" id="CLU_016422_0_0_1"/>
<dbReference type="InParanoid" id="P57095"/>
<dbReference type="OMA" id="TEPCLAL"/>
<dbReference type="OrthoDB" id="10007451at2759"/>
<dbReference type="PhylomeDB" id="P57095"/>
<dbReference type="TreeFam" id="TF315454"/>
<dbReference type="Reactome" id="R-DRE-4641257">
    <property type="pathway name" value="Degradation of AXIN"/>
</dbReference>
<dbReference type="PRO" id="PR:P57095"/>
<dbReference type="Proteomes" id="UP000000437">
    <property type="component" value="Chromosome 3"/>
</dbReference>
<dbReference type="Bgee" id="ENSDARG00000100149">
    <property type="expression patterns" value="Expressed in blastodisc and 55 other cell types or tissues"/>
</dbReference>
<dbReference type="ExpressionAtlas" id="P57095">
    <property type="expression patterns" value="baseline and differential"/>
</dbReference>
<dbReference type="GO" id="GO:0030877">
    <property type="term" value="C:beta-catenin destruction complex"/>
    <property type="evidence" value="ECO:0000318"/>
    <property type="project" value="GO_Central"/>
</dbReference>
<dbReference type="GO" id="GO:0005737">
    <property type="term" value="C:cytoplasm"/>
    <property type="evidence" value="ECO:0007669"/>
    <property type="project" value="UniProtKB-SubCell"/>
</dbReference>
<dbReference type="GO" id="GO:0005634">
    <property type="term" value="C:nucleus"/>
    <property type="evidence" value="ECO:0000318"/>
    <property type="project" value="GO_Central"/>
</dbReference>
<dbReference type="GO" id="GO:0005886">
    <property type="term" value="C:plasma membrane"/>
    <property type="evidence" value="ECO:0000318"/>
    <property type="project" value="GO_Central"/>
</dbReference>
<dbReference type="GO" id="GO:0008013">
    <property type="term" value="F:beta-catenin binding"/>
    <property type="evidence" value="ECO:0000318"/>
    <property type="project" value="GO_Central"/>
</dbReference>
<dbReference type="GO" id="GO:0070411">
    <property type="term" value="F:I-SMAD binding"/>
    <property type="evidence" value="ECO:0000318"/>
    <property type="project" value="GO_Central"/>
</dbReference>
<dbReference type="GO" id="GO:0060090">
    <property type="term" value="F:molecular adaptor activity"/>
    <property type="evidence" value="ECO:0000318"/>
    <property type="project" value="GO_Central"/>
</dbReference>
<dbReference type="GO" id="GO:0019901">
    <property type="term" value="F:protein kinase binding"/>
    <property type="evidence" value="ECO:0000318"/>
    <property type="project" value="GO_Central"/>
</dbReference>
<dbReference type="GO" id="GO:0031625">
    <property type="term" value="F:ubiquitin protein ligase binding"/>
    <property type="evidence" value="ECO:0000318"/>
    <property type="project" value="GO_Central"/>
</dbReference>
<dbReference type="GO" id="GO:0048468">
    <property type="term" value="P:cell development"/>
    <property type="evidence" value="ECO:0000318"/>
    <property type="project" value="GO_Central"/>
</dbReference>
<dbReference type="GO" id="GO:0009950">
    <property type="term" value="P:dorsal/ventral axis specification"/>
    <property type="evidence" value="ECO:0000316"/>
    <property type="project" value="ZFIN"/>
</dbReference>
<dbReference type="GO" id="GO:0009953">
    <property type="term" value="P:dorsal/ventral pattern formation"/>
    <property type="evidence" value="ECO:0000314"/>
    <property type="project" value="ZFIN"/>
</dbReference>
<dbReference type="GO" id="GO:0007507">
    <property type="term" value="P:heart development"/>
    <property type="evidence" value="ECO:0000315"/>
    <property type="project" value="ZFIN"/>
</dbReference>
<dbReference type="GO" id="GO:0090090">
    <property type="term" value="P:negative regulation of canonical Wnt signaling pathway"/>
    <property type="evidence" value="ECO:0000314"/>
    <property type="project" value="UniProtKB"/>
</dbReference>
<dbReference type="GO" id="GO:0032436">
    <property type="term" value="P:positive regulation of proteasomal ubiquitin-dependent protein catabolic process"/>
    <property type="evidence" value="ECO:0000318"/>
    <property type="project" value="GO_Central"/>
</dbReference>
<dbReference type="GO" id="GO:0070602">
    <property type="term" value="P:regulation of centromeric sister chromatid cohesion"/>
    <property type="evidence" value="ECO:0000318"/>
    <property type="project" value="GO_Central"/>
</dbReference>
<dbReference type="GO" id="GO:0016055">
    <property type="term" value="P:Wnt signaling pathway"/>
    <property type="evidence" value="ECO:0007669"/>
    <property type="project" value="UniProtKB-KW"/>
</dbReference>
<dbReference type="CDD" id="cd11582">
    <property type="entry name" value="Axin_TNKS_binding"/>
    <property type="match status" value="1"/>
</dbReference>
<dbReference type="CDD" id="cd08707">
    <property type="entry name" value="RGS_Axin"/>
    <property type="match status" value="1"/>
</dbReference>
<dbReference type="FunFam" id="1.10.167.10:FF:000003">
    <property type="entry name" value="Axin 1"/>
    <property type="match status" value="1"/>
</dbReference>
<dbReference type="FunFam" id="2.40.240.130:FF:000002">
    <property type="entry name" value="Axin 1"/>
    <property type="match status" value="1"/>
</dbReference>
<dbReference type="Gene3D" id="1.10.196.10">
    <property type="match status" value="1"/>
</dbReference>
<dbReference type="Gene3D" id="2.40.240.130">
    <property type="match status" value="1"/>
</dbReference>
<dbReference type="Gene3D" id="1.10.167.10">
    <property type="entry name" value="Regulator of G-protein Signalling 4, domain 2"/>
    <property type="match status" value="1"/>
</dbReference>
<dbReference type="InterPro" id="IPR043581">
    <property type="entry name" value="Axin-like"/>
</dbReference>
<dbReference type="InterPro" id="IPR014936">
    <property type="entry name" value="Axin_b-cat-bd"/>
</dbReference>
<dbReference type="InterPro" id="IPR032101">
    <property type="entry name" value="Axin_TNKS-bd"/>
</dbReference>
<dbReference type="InterPro" id="IPR001158">
    <property type="entry name" value="DIX"/>
</dbReference>
<dbReference type="InterPro" id="IPR038207">
    <property type="entry name" value="DIX_dom_sf"/>
</dbReference>
<dbReference type="InterPro" id="IPR016137">
    <property type="entry name" value="RGS"/>
</dbReference>
<dbReference type="InterPro" id="IPR036305">
    <property type="entry name" value="RGS_sf"/>
</dbReference>
<dbReference type="InterPro" id="IPR024066">
    <property type="entry name" value="RGS_subdom1/3"/>
</dbReference>
<dbReference type="InterPro" id="IPR044926">
    <property type="entry name" value="RGS_subdomain_2"/>
</dbReference>
<dbReference type="InterPro" id="IPR029071">
    <property type="entry name" value="Ubiquitin-like_domsf"/>
</dbReference>
<dbReference type="PANTHER" id="PTHR46102">
    <property type="entry name" value="AXIN"/>
    <property type="match status" value="1"/>
</dbReference>
<dbReference type="PANTHER" id="PTHR46102:SF1">
    <property type="entry name" value="AXIN-2"/>
    <property type="match status" value="1"/>
</dbReference>
<dbReference type="Pfam" id="PF16646">
    <property type="entry name" value="AXIN1_TNKS_BD"/>
    <property type="match status" value="1"/>
</dbReference>
<dbReference type="Pfam" id="PF08833">
    <property type="entry name" value="Axin_b-cat_bind"/>
    <property type="match status" value="1"/>
</dbReference>
<dbReference type="Pfam" id="PF00778">
    <property type="entry name" value="DIX"/>
    <property type="match status" value="1"/>
</dbReference>
<dbReference type="Pfam" id="PF00615">
    <property type="entry name" value="RGS"/>
    <property type="match status" value="1"/>
</dbReference>
<dbReference type="PRINTS" id="PR01301">
    <property type="entry name" value="RGSPROTEIN"/>
</dbReference>
<dbReference type="SMART" id="SM00021">
    <property type="entry name" value="DAX"/>
    <property type="match status" value="1"/>
</dbReference>
<dbReference type="SMART" id="SM00315">
    <property type="entry name" value="RGS"/>
    <property type="match status" value="1"/>
</dbReference>
<dbReference type="SUPFAM" id="SSF48097">
    <property type="entry name" value="Regulator of G-protein signaling, RGS"/>
    <property type="match status" value="1"/>
</dbReference>
<dbReference type="SUPFAM" id="SSF54236">
    <property type="entry name" value="Ubiquitin-like"/>
    <property type="match status" value="1"/>
</dbReference>
<dbReference type="PROSITE" id="PS50841">
    <property type="entry name" value="DIX"/>
    <property type="match status" value="1"/>
</dbReference>
<dbReference type="PROSITE" id="PS50132">
    <property type="entry name" value="RGS"/>
    <property type="match status" value="1"/>
</dbReference>